<name>COX1_BUTBU</name>
<reference key="1">
    <citation type="journal article" date="2001" name="Mol. Biol. Evol.">
        <title>The complete sequence of the mitochondrial genome of Buteo buteo (Aves, Accipitridae) indicates an early split in the phylogeny of raptors.</title>
        <authorList>
            <person name="Haring E."/>
            <person name="Kruckenhauser L."/>
            <person name="Gamauf A."/>
            <person name="Riesing M.J."/>
            <person name="Pinsker W."/>
        </authorList>
    </citation>
    <scope>NUCLEOTIDE SEQUENCE [GENOMIC DNA]</scope>
</reference>
<keyword id="KW-0106">Calcium</keyword>
<keyword id="KW-0186">Copper</keyword>
<keyword id="KW-0249">Electron transport</keyword>
<keyword id="KW-0349">Heme</keyword>
<keyword id="KW-0408">Iron</keyword>
<keyword id="KW-0460">Magnesium</keyword>
<keyword id="KW-0472">Membrane</keyword>
<keyword id="KW-0479">Metal-binding</keyword>
<keyword id="KW-0496">Mitochondrion</keyword>
<keyword id="KW-0999">Mitochondrion inner membrane</keyword>
<keyword id="KW-0679">Respiratory chain</keyword>
<keyword id="KW-0915">Sodium</keyword>
<keyword id="KW-1278">Translocase</keyword>
<keyword id="KW-0812">Transmembrane</keyword>
<keyword id="KW-1133">Transmembrane helix</keyword>
<keyword id="KW-0813">Transport</keyword>
<geneLocation type="mitochondrion"/>
<organism>
    <name type="scientific">Buteo buteo</name>
    <name type="common">Eurasian buzzard</name>
    <dbReference type="NCBI Taxonomy" id="30397"/>
    <lineage>
        <taxon>Eukaryota</taxon>
        <taxon>Metazoa</taxon>
        <taxon>Chordata</taxon>
        <taxon>Craniata</taxon>
        <taxon>Vertebrata</taxon>
        <taxon>Euteleostomi</taxon>
        <taxon>Archelosauria</taxon>
        <taxon>Archosauria</taxon>
        <taxon>Dinosauria</taxon>
        <taxon>Saurischia</taxon>
        <taxon>Theropoda</taxon>
        <taxon>Coelurosauria</taxon>
        <taxon>Aves</taxon>
        <taxon>Neognathae</taxon>
        <taxon>Neoaves</taxon>
        <taxon>Telluraves</taxon>
        <taxon>Accipitrimorphae</taxon>
        <taxon>Accipitriformes</taxon>
        <taxon>Accipitridae</taxon>
        <taxon>Accipitrinae</taxon>
        <taxon>Buteo</taxon>
    </lineage>
</organism>
<sequence>MTFINRWLFSTNHKDIGTLYLIFGAWAGMVGTALSLLIRAELGQPGTLLGDDQIYNVIVTAHAFVMIFFMVMPIMIGGFGNWLVPLMIGAPDMAFPRMNNMSFWLLPPSFLLLLASSTVEAGAGTGWTVYPPLAGNMAHAGASVDLAIFSLHLAGVSSILGAINFITTAINMKPPALSQYQTPLFVWSVLITAVLLLLSLPVLAAGITMLLTDRNLNTTFFDPAGGGDPILYQHLFWFFGHPEVYILILPGFGIISHVVTYYAGKKEPFGYMGMVWAMLSIGFLGFIVWAHHMFTVGMDVDTRAYFTSATMIIAIPTGIKVFSWLATLHGGTIKWDPPMLWALGFIFLFTIGGLTGIVLANSSLDIALHDAYYVVAHFHYVLSMGAVFAILAGFTHWFPLLTGFTLHPTWAKAHFGVMFTGVNLTFFPQHFLGLAGMPRRYSDYPDAYTLWNTLSSIGSLISMTAVIMLMFIIWEAFASKRKILQPELTTTNVEWIHGCPPPYHTFEEPAFVQVQE</sequence>
<protein>
    <recommendedName>
        <fullName>Cytochrome c oxidase subunit 1</fullName>
        <ecNumber>7.1.1.9</ecNumber>
    </recommendedName>
    <alternativeName>
        <fullName>Cytochrome c oxidase polypeptide I</fullName>
    </alternativeName>
</protein>
<accession>Q94WR7</accession>
<proteinExistence type="inferred from homology"/>
<evidence type="ECO:0000250" key="1">
    <source>
        <dbReference type="UniProtKB" id="P00395"/>
    </source>
</evidence>
<evidence type="ECO:0000250" key="2">
    <source>
        <dbReference type="UniProtKB" id="P00396"/>
    </source>
</evidence>
<evidence type="ECO:0000250" key="3">
    <source>
        <dbReference type="UniProtKB" id="P00401"/>
    </source>
</evidence>
<evidence type="ECO:0000305" key="4"/>
<comment type="function">
    <text evidence="3">Component of the cytochrome c oxidase, the last enzyme in the mitochondrial electron transport chain which drives oxidative phosphorylation. The respiratory chain contains 3 multisubunit complexes succinate dehydrogenase (complex II, CII), ubiquinol-cytochrome c oxidoreductase (cytochrome b-c1 complex, complex III, CIII) and cytochrome c oxidase (complex IV, CIV), that cooperate to transfer electrons derived from NADH and succinate to molecular oxygen, creating an electrochemical gradient over the inner membrane that drives transmembrane transport and the ATP synthase. Cytochrome c oxidase is the component of the respiratory chain that catalyzes the reduction of oxygen to water. Electrons originating from reduced cytochrome c in the intermembrane space (IMS) are transferred via the dinuclear copper A center (CU(A)) of subunit 2 and heme A of subunit 1 to the active site in subunit 1, a binuclear center (BNC) formed by heme A3 and copper B (CU(B)). The BNC reduces molecular oxygen to 2 water molecules using 4 electrons from cytochrome c in the IMS and 4 protons from the mitochondrial matrix.</text>
</comment>
<comment type="catalytic activity">
    <reaction evidence="3">
        <text>4 Fe(II)-[cytochrome c] + O2 + 8 H(+)(in) = 4 Fe(III)-[cytochrome c] + 2 H2O + 4 H(+)(out)</text>
        <dbReference type="Rhea" id="RHEA:11436"/>
        <dbReference type="Rhea" id="RHEA-COMP:10350"/>
        <dbReference type="Rhea" id="RHEA-COMP:14399"/>
        <dbReference type="ChEBI" id="CHEBI:15377"/>
        <dbReference type="ChEBI" id="CHEBI:15378"/>
        <dbReference type="ChEBI" id="CHEBI:15379"/>
        <dbReference type="ChEBI" id="CHEBI:29033"/>
        <dbReference type="ChEBI" id="CHEBI:29034"/>
        <dbReference type="EC" id="7.1.1.9"/>
    </reaction>
    <physiologicalReaction direction="left-to-right" evidence="3">
        <dbReference type="Rhea" id="RHEA:11437"/>
    </physiologicalReaction>
</comment>
<comment type="cofactor">
    <cofactor evidence="2">
        <name>heme</name>
        <dbReference type="ChEBI" id="CHEBI:30413"/>
    </cofactor>
    <text evidence="2">Binds 2 heme A groups non-covalently per subunit.</text>
</comment>
<comment type="cofactor">
    <cofactor evidence="2">
        <name>Cu cation</name>
        <dbReference type="ChEBI" id="CHEBI:23378"/>
    </cofactor>
    <text evidence="2">Binds a copper B center.</text>
</comment>
<comment type="pathway">
    <text evidence="3">Energy metabolism; oxidative phosphorylation.</text>
</comment>
<comment type="subunit">
    <text evidence="1 2">Component of the cytochrome c oxidase (complex IV, CIV), a multisubunit enzyme composed of 14 subunits. The complex is composed of a catalytic core of 3 subunits MT-CO1, MT-CO2 and MT-CO3, encoded in the mitochondrial DNA, and 11 supernumerary subunits COX4I, COX5A, COX5B, COX6A, COX6B, COX6C, COX7A, COX7B, COX7C, COX8 and NDUFA4, which are encoded in the nuclear genome. The complex exists as a monomer or a dimer and forms supercomplexes (SCs) in the inner mitochondrial membrane with NADH-ubiquinone oxidoreductase (complex I, CI) and ubiquinol-cytochrome c oxidoreductase (cytochrome b-c1 complex, complex III, CIII), resulting in different assemblies (supercomplex SCI(1)III(2)IV(1) and megacomplex MCI(2)III(2)IV(2)) (By similarity). As a newly synthesized protein, rapidly incorporates into a multi-subunit assembly intermediate in the inner membrane, called MITRAC (mitochondrial translation regulation assembly intermediate of cytochrome c oxidase) complex, whose core components are COA3/MITRAC12 and COX14. Within the MITRAC complex, interacts with COA3 and with SMIM20/MITRAC7; the interaction with SMIM20 stabilizes the newly synthesized MT-CO1 and prevents its premature turnover. Interacts with TMEM177 in a COX20-dependent manner (By similarity).</text>
</comment>
<comment type="subcellular location">
    <subcellularLocation>
        <location evidence="2">Mitochondrion inner membrane</location>
        <topology evidence="2">Multi-pass membrane protein</topology>
    </subcellularLocation>
</comment>
<comment type="similarity">
    <text evidence="4">Belongs to the heme-copper respiratory oxidase family.</text>
</comment>
<gene>
    <name type="primary">MT-CO1</name>
    <name type="synonym">COI</name>
    <name type="synonym">COXI</name>
    <name type="synonym">MTCO1</name>
</gene>
<feature type="chain" id="PRO_0000183297" description="Cytochrome c oxidase subunit 1">
    <location>
        <begin position="1"/>
        <end position="516"/>
    </location>
</feature>
<feature type="topological domain" description="Mitochondrial matrix" evidence="2">
    <location>
        <begin position="1"/>
        <end position="12"/>
    </location>
</feature>
<feature type="transmembrane region" description="Helical; Name=I" evidence="2">
    <location>
        <begin position="13"/>
        <end position="41"/>
    </location>
</feature>
<feature type="topological domain" description="Mitochondrial intermembrane" evidence="2">
    <location>
        <begin position="42"/>
        <end position="51"/>
    </location>
</feature>
<feature type="transmembrane region" description="Helical; Name=II" evidence="2">
    <location>
        <begin position="52"/>
        <end position="87"/>
    </location>
</feature>
<feature type="topological domain" description="Mitochondrial matrix" evidence="2">
    <location>
        <begin position="88"/>
        <end position="95"/>
    </location>
</feature>
<feature type="transmembrane region" description="Helical; Name=III" evidence="2">
    <location>
        <begin position="96"/>
        <end position="118"/>
    </location>
</feature>
<feature type="topological domain" description="Mitochondrial intermembrane" evidence="2">
    <location>
        <begin position="119"/>
        <end position="141"/>
    </location>
</feature>
<feature type="transmembrane region" description="Helical; Name=IV" evidence="2">
    <location>
        <begin position="142"/>
        <end position="171"/>
    </location>
</feature>
<feature type="topological domain" description="Mitochondrial matrix" evidence="2">
    <location>
        <begin position="172"/>
        <end position="183"/>
    </location>
</feature>
<feature type="transmembrane region" description="Helical; Name=V" evidence="2">
    <location>
        <begin position="184"/>
        <end position="213"/>
    </location>
</feature>
<feature type="topological domain" description="Mitochondrial intermembrane" evidence="2">
    <location>
        <begin position="214"/>
        <end position="228"/>
    </location>
</feature>
<feature type="transmembrane region" description="Helical; Name=VI" evidence="2">
    <location>
        <begin position="229"/>
        <end position="262"/>
    </location>
</feature>
<feature type="topological domain" description="Mitochondrial matrix" evidence="2">
    <location>
        <begin position="263"/>
        <end position="270"/>
    </location>
</feature>
<feature type="transmembrane region" description="Helical; Name=VII" evidence="2">
    <location>
        <begin position="271"/>
        <end position="287"/>
    </location>
</feature>
<feature type="topological domain" description="Mitochondrial intermembrane" evidence="2">
    <location>
        <begin position="288"/>
        <end position="299"/>
    </location>
</feature>
<feature type="transmembrane region" description="Helical; Name=VIII" evidence="2">
    <location>
        <begin position="300"/>
        <end position="328"/>
    </location>
</feature>
<feature type="topological domain" description="Mitochondrial matrix" evidence="2">
    <location>
        <begin position="329"/>
        <end position="336"/>
    </location>
</feature>
<feature type="transmembrane region" description="Helical; Name=IX" evidence="2">
    <location>
        <begin position="337"/>
        <end position="358"/>
    </location>
</feature>
<feature type="topological domain" description="Mitochondrial intermembrane" evidence="2">
    <location>
        <begin position="359"/>
        <end position="371"/>
    </location>
</feature>
<feature type="transmembrane region" description="Helical; Name=X" evidence="2">
    <location>
        <begin position="372"/>
        <end position="401"/>
    </location>
</feature>
<feature type="topological domain" description="Mitochondrial matrix" evidence="2">
    <location>
        <begin position="402"/>
        <end position="407"/>
    </location>
</feature>
<feature type="transmembrane region" description="Helical; Name=XI" evidence="2">
    <location>
        <begin position="408"/>
        <end position="434"/>
    </location>
</feature>
<feature type="topological domain" description="Mitochondrial intermembrane" evidence="2">
    <location>
        <begin position="435"/>
        <end position="447"/>
    </location>
</feature>
<feature type="transmembrane region" description="Helical; Name=XII" evidence="2">
    <location>
        <begin position="448"/>
        <end position="479"/>
    </location>
</feature>
<feature type="topological domain" description="Mitochondrial matrix" evidence="2">
    <location>
        <begin position="480"/>
        <end position="516"/>
    </location>
</feature>
<feature type="binding site" evidence="2">
    <location>
        <position position="41"/>
    </location>
    <ligand>
        <name>Na(+)</name>
        <dbReference type="ChEBI" id="CHEBI:29101"/>
    </ligand>
</feature>
<feature type="binding site" evidence="2">
    <location>
        <position position="46"/>
    </location>
    <ligand>
        <name>Na(+)</name>
        <dbReference type="ChEBI" id="CHEBI:29101"/>
    </ligand>
</feature>
<feature type="binding site" description="axial binding residue" evidence="2">
    <location>
        <position position="62"/>
    </location>
    <ligand>
        <name>Fe(II)-heme a</name>
        <dbReference type="ChEBI" id="CHEBI:61715"/>
        <note>low-spin</note>
    </ligand>
    <ligandPart>
        <name>Fe</name>
        <dbReference type="ChEBI" id="CHEBI:18248"/>
    </ligandPart>
</feature>
<feature type="binding site" evidence="2">
    <location>
        <position position="241"/>
    </location>
    <ligand>
        <name>Cu cation</name>
        <dbReference type="ChEBI" id="CHEBI:23378"/>
        <label>B</label>
    </ligand>
</feature>
<feature type="binding site" evidence="2">
    <location>
        <position position="245"/>
    </location>
    <ligand>
        <name>O2</name>
        <dbReference type="ChEBI" id="CHEBI:15379"/>
    </ligand>
</feature>
<feature type="binding site" evidence="2">
    <location>
        <position position="291"/>
    </location>
    <ligand>
        <name>Cu cation</name>
        <dbReference type="ChEBI" id="CHEBI:23378"/>
        <label>B</label>
    </ligand>
</feature>
<feature type="binding site" evidence="2">
    <location>
        <position position="292"/>
    </location>
    <ligand>
        <name>Cu cation</name>
        <dbReference type="ChEBI" id="CHEBI:23378"/>
        <label>B</label>
    </ligand>
</feature>
<feature type="binding site" evidence="2">
    <location>
        <position position="369"/>
    </location>
    <ligand>
        <name>Mg(2+)</name>
        <dbReference type="ChEBI" id="CHEBI:18420"/>
        <note>ligand shared with MT-CO2</note>
    </ligand>
</feature>
<feature type="binding site" evidence="2">
    <location>
        <position position="370"/>
    </location>
    <ligand>
        <name>Mg(2+)</name>
        <dbReference type="ChEBI" id="CHEBI:18420"/>
        <note>ligand shared with MT-CO2</note>
    </ligand>
</feature>
<feature type="binding site" description="axial binding residue" evidence="2">
    <location>
        <position position="377"/>
    </location>
    <ligand>
        <name>heme a3</name>
        <dbReference type="ChEBI" id="CHEBI:83282"/>
        <note>high-spin</note>
    </ligand>
    <ligandPart>
        <name>Fe</name>
        <dbReference type="ChEBI" id="CHEBI:18248"/>
    </ligandPart>
</feature>
<feature type="binding site" description="axial binding residue" evidence="2">
    <location>
        <position position="379"/>
    </location>
    <ligand>
        <name>Fe(II)-heme a</name>
        <dbReference type="ChEBI" id="CHEBI:61715"/>
        <note>low-spin</note>
    </ligand>
    <ligandPart>
        <name>Fe</name>
        <dbReference type="ChEBI" id="CHEBI:18248"/>
    </ligandPart>
</feature>
<feature type="binding site" evidence="2">
    <location>
        <position position="442"/>
    </location>
    <ligand>
        <name>Na(+)</name>
        <dbReference type="ChEBI" id="CHEBI:29101"/>
    </ligand>
</feature>
<feature type="cross-link" description="1'-histidyl-3'-tyrosine (His-Tyr)" evidence="2">
    <location>
        <begin position="241"/>
        <end position="245"/>
    </location>
</feature>
<dbReference type="EC" id="7.1.1.9"/>
<dbReference type="EMBL" id="AF380305">
    <property type="protein sequence ID" value="AAL11083.1"/>
    <property type="molecule type" value="Genomic_DNA"/>
</dbReference>
<dbReference type="SMR" id="Q94WR7"/>
<dbReference type="CTD" id="4512"/>
<dbReference type="UniPathway" id="UPA00705"/>
<dbReference type="GO" id="GO:0005743">
    <property type="term" value="C:mitochondrial inner membrane"/>
    <property type="evidence" value="ECO:0007669"/>
    <property type="project" value="UniProtKB-SubCell"/>
</dbReference>
<dbReference type="GO" id="GO:0045277">
    <property type="term" value="C:respiratory chain complex IV"/>
    <property type="evidence" value="ECO:0000250"/>
    <property type="project" value="UniProtKB"/>
</dbReference>
<dbReference type="GO" id="GO:0004129">
    <property type="term" value="F:cytochrome-c oxidase activity"/>
    <property type="evidence" value="ECO:0007669"/>
    <property type="project" value="UniProtKB-EC"/>
</dbReference>
<dbReference type="GO" id="GO:0020037">
    <property type="term" value="F:heme binding"/>
    <property type="evidence" value="ECO:0007669"/>
    <property type="project" value="InterPro"/>
</dbReference>
<dbReference type="GO" id="GO:0046872">
    <property type="term" value="F:metal ion binding"/>
    <property type="evidence" value="ECO:0007669"/>
    <property type="project" value="UniProtKB-KW"/>
</dbReference>
<dbReference type="GO" id="GO:0015990">
    <property type="term" value="P:electron transport coupled proton transport"/>
    <property type="evidence" value="ECO:0007669"/>
    <property type="project" value="TreeGrafter"/>
</dbReference>
<dbReference type="GO" id="GO:0006123">
    <property type="term" value="P:mitochondrial electron transport, cytochrome c to oxygen"/>
    <property type="evidence" value="ECO:0007669"/>
    <property type="project" value="TreeGrafter"/>
</dbReference>
<dbReference type="CDD" id="cd01663">
    <property type="entry name" value="Cyt_c_Oxidase_I"/>
    <property type="match status" value="1"/>
</dbReference>
<dbReference type="FunFam" id="1.20.210.10:FF:000001">
    <property type="entry name" value="Cytochrome c oxidase subunit 1"/>
    <property type="match status" value="1"/>
</dbReference>
<dbReference type="Gene3D" id="1.20.210.10">
    <property type="entry name" value="Cytochrome c oxidase-like, subunit I domain"/>
    <property type="match status" value="1"/>
</dbReference>
<dbReference type="InterPro" id="IPR023616">
    <property type="entry name" value="Cyt_c_oxase-like_su1_dom"/>
</dbReference>
<dbReference type="InterPro" id="IPR036927">
    <property type="entry name" value="Cyt_c_oxase-like_su1_sf"/>
</dbReference>
<dbReference type="InterPro" id="IPR000883">
    <property type="entry name" value="Cyt_C_Oxase_1"/>
</dbReference>
<dbReference type="InterPro" id="IPR023615">
    <property type="entry name" value="Cyt_c_Oxase_su1_BS"/>
</dbReference>
<dbReference type="InterPro" id="IPR033944">
    <property type="entry name" value="Cyt_c_oxase_su1_dom"/>
</dbReference>
<dbReference type="PANTHER" id="PTHR10422">
    <property type="entry name" value="CYTOCHROME C OXIDASE SUBUNIT 1"/>
    <property type="match status" value="1"/>
</dbReference>
<dbReference type="PANTHER" id="PTHR10422:SF18">
    <property type="entry name" value="CYTOCHROME C OXIDASE SUBUNIT 1"/>
    <property type="match status" value="1"/>
</dbReference>
<dbReference type="Pfam" id="PF00115">
    <property type="entry name" value="COX1"/>
    <property type="match status" value="1"/>
</dbReference>
<dbReference type="PRINTS" id="PR01165">
    <property type="entry name" value="CYCOXIDASEI"/>
</dbReference>
<dbReference type="SUPFAM" id="SSF81442">
    <property type="entry name" value="Cytochrome c oxidase subunit I-like"/>
    <property type="match status" value="1"/>
</dbReference>
<dbReference type="PROSITE" id="PS50855">
    <property type="entry name" value="COX1"/>
    <property type="match status" value="1"/>
</dbReference>
<dbReference type="PROSITE" id="PS00077">
    <property type="entry name" value="COX1_CUB"/>
    <property type="match status" value="1"/>
</dbReference>